<protein>
    <recommendedName>
        <fullName evidence="1">Anthranilate phosphoribosyltransferase</fullName>
        <ecNumber evidence="1">2.4.2.18</ecNumber>
    </recommendedName>
</protein>
<name>TRPD_METTM</name>
<accession>P26925</accession>
<accession>D9PUF1</accession>
<keyword id="KW-0028">Amino-acid biosynthesis</keyword>
<keyword id="KW-0057">Aromatic amino acid biosynthesis</keyword>
<keyword id="KW-0328">Glycosyltransferase</keyword>
<keyword id="KW-0460">Magnesium</keyword>
<keyword id="KW-0479">Metal-binding</keyword>
<keyword id="KW-0808">Transferase</keyword>
<keyword id="KW-0822">Tryptophan biosynthesis</keyword>
<feature type="chain" id="PRO_0000154516" description="Anthranilate phosphoribosyltransferase">
    <location>
        <begin position="1"/>
        <end position="350"/>
    </location>
</feature>
<feature type="binding site" evidence="1">
    <location>
        <position position="82"/>
    </location>
    <ligand>
        <name>5-phospho-alpha-D-ribose 1-diphosphate</name>
        <dbReference type="ChEBI" id="CHEBI:58017"/>
    </ligand>
</feature>
<feature type="binding site" evidence="1">
    <location>
        <position position="82"/>
    </location>
    <ligand>
        <name>anthranilate</name>
        <dbReference type="ChEBI" id="CHEBI:16567"/>
        <label>1</label>
    </ligand>
</feature>
<feature type="binding site" evidence="1">
    <location>
        <begin position="85"/>
        <end position="86"/>
    </location>
    <ligand>
        <name>5-phospho-alpha-D-ribose 1-diphosphate</name>
        <dbReference type="ChEBI" id="CHEBI:58017"/>
    </ligand>
</feature>
<feature type="binding site" evidence="1">
    <location>
        <position position="90"/>
    </location>
    <ligand>
        <name>5-phospho-alpha-D-ribose 1-diphosphate</name>
        <dbReference type="ChEBI" id="CHEBI:58017"/>
    </ligand>
</feature>
<feature type="binding site" evidence="1">
    <location>
        <begin position="92"/>
        <end position="95"/>
    </location>
    <ligand>
        <name>5-phospho-alpha-D-ribose 1-diphosphate</name>
        <dbReference type="ChEBI" id="CHEBI:58017"/>
    </ligand>
</feature>
<feature type="binding site" evidence="1">
    <location>
        <position position="94"/>
    </location>
    <ligand>
        <name>Mg(2+)</name>
        <dbReference type="ChEBI" id="CHEBI:18420"/>
        <label>1</label>
    </ligand>
</feature>
<feature type="binding site" evidence="1">
    <location>
        <begin position="110"/>
        <end position="118"/>
    </location>
    <ligand>
        <name>5-phospho-alpha-D-ribose 1-diphosphate</name>
        <dbReference type="ChEBI" id="CHEBI:58017"/>
    </ligand>
</feature>
<feature type="binding site" evidence="1">
    <location>
        <position position="113"/>
    </location>
    <ligand>
        <name>anthranilate</name>
        <dbReference type="ChEBI" id="CHEBI:16567"/>
        <label>1</label>
    </ligand>
</feature>
<feature type="binding site" evidence="1">
    <location>
        <position position="122"/>
    </location>
    <ligand>
        <name>5-phospho-alpha-D-ribose 1-diphosphate</name>
        <dbReference type="ChEBI" id="CHEBI:58017"/>
    </ligand>
</feature>
<feature type="binding site" evidence="1">
    <location>
        <position position="168"/>
    </location>
    <ligand>
        <name>anthranilate</name>
        <dbReference type="ChEBI" id="CHEBI:16567"/>
        <label>2</label>
    </ligand>
</feature>
<feature type="binding site" evidence="1">
    <location>
        <position position="232"/>
    </location>
    <ligand>
        <name>Mg(2+)</name>
        <dbReference type="ChEBI" id="CHEBI:18420"/>
        <label>2</label>
    </ligand>
</feature>
<feature type="binding site" evidence="1">
    <location>
        <position position="233"/>
    </location>
    <ligand>
        <name>Mg(2+)</name>
        <dbReference type="ChEBI" id="CHEBI:18420"/>
        <label>1</label>
    </ligand>
</feature>
<feature type="binding site" evidence="1">
    <location>
        <position position="233"/>
    </location>
    <ligand>
        <name>Mg(2+)</name>
        <dbReference type="ChEBI" id="CHEBI:18420"/>
        <label>2</label>
    </ligand>
</feature>
<dbReference type="EC" id="2.4.2.18" evidence="1"/>
<dbReference type="EMBL" id="M65060">
    <property type="protein sequence ID" value="AAA73034.1"/>
    <property type="molecule type" value="Genomic_DNA"/>
</dbReference>
<dbReference type="EMBL" id="CP001710">
    <property type="protein sequence ID" value="ADL57849.1"/>
    <property type="molecule type" value="Genomic_DNA"/>
</dbReference>
<dbReference type="RefSeq" id="WP_013295076.1">
    <property type="nucleotide sequence ID" value="NC_014408.1"/>
</dbReference>
<dbReference type="SMR" id="P26925"/>
<dbReference type="STRING" id="79929.MTBMA_c02400"/>
<dbReference type="PaxDb" id="79929-MTBMA_c02400"/>
<dbReference type="GeneID" id="41326837"/>
<dbReference type="GeneID" id="9703946"/>
<dbReference type="KEGG" id="mmg:MTBMA_c02400"/>
<dbReference type="PATRIC" id="fig|79929.8.peg.236"/>
<dbReference type="HOGENOM" id="CLU_034315_2_1_2"/>
<dbReference type="OrthoDB" id="8214at2157"/>
<dbReference type="UniPathway" id="UPA00035">
    <property type="reaction ID" value="UER00041"/>
</dbReference>
<dbReference type="Proteomes" id="UP000000345">
    <property type="component" value="Chromosome"/>
</dbReference>
<dbReference type="GO" id="GO:0005829">
    <property type="term" value="C:cytosol"/>
    <property type="evidence" value="ECO:0007669"/>
    <property type="project" value="TreeGrafter"/>
</dbReference>
<dbReference type="GO" id="GO:0004048">
    <property type="term" value="F:anthranilate phosphoribosyltransferase activity"/>
    <property type="evidence" value="ECO:0007669"/>
    <property type="project" value="UniProtKB-UniRule"/>
</dbReference>
<dbReference type="GO" id="GO:0000287">
    <property type="term" value="F:magnesium ion binding"/>
    <property type="evidence" value="ECO:0007669"/>
    <property type="project" value="UniProtKB-UniRule"/>
</dbReference>
<dbReference type="GO" id="GO:0000162">
    <property type="term" value="P:L-tryptophan biosynthetic process"/>
    <property type="evidence" value="ECO:0007669"/>
    <property type="project" value="UniProtKB-UniRule"/>
</dbReference>
<dbReference type="FunFam" id="3.40.1030.10:FF:000002">
    <property type="entry name" value="Anthranilate phosphoribosyltransferase"/>
    <property type="match status" value="1"/>
</dbReference>
<dbReference type="Gene3D" id="3.40.1030.10">
    <property type="entry name" value="Nucleoside phosphorylase/phosphoribosyltransferase catalytic domain"/>
    <property type="match status" value="1"/>
</dbReference>
<dbReference type="Gene3D" id="1.20.970.10">
    <property type="entry name" value="Transferase, Pyrimidine Nucleoside Phosphorylase, Chain C"/>
    <property type="match status" value="1"/>
</dbReference>
<dbReference type="HAMAP" id="MF_00211">
    <property type="entry name" value="TrpD"/>
    <property type="match status" value="1"/>
</dbReference>
<dbReference type="InterPro" id="IPR005940">
    <property type="entry name" value="Anthranilate_Pribosyl_Tfrase"/>
</dbReference>
<dbReference type="InterPro" id="IPR000312">
    <property type="entry name" value="Glycosyl_Trfase_fam3"/>
</dbReference>
<dbReference type="InterPro" id="IPR017459">
    <property type="entry name" value="Glycosyl_Trfase_fam3_N_dom"/>
</dbReference>
<dbReference type="InterPro" id="IPR036320">
    <property type="entry name" value="Glycosyl_Trfase_fam3_N_dom_sf"/>
</dbReference>
<dbReference type="InterPro" id="IPR035902">
    <property type="entry name" value="Nuc_phospho_transferase"/>
</dbReference>
<dbReference type="NCBIfam" id="TIGR01245">
    <property type="entry name" value="trpD"/>
    <property type="match status" value="1"/>
</dbReference>
<dbReference type="PANTHER" id="PTHR43285">
    <property type="entry name" value="ANTHRANILATE PHOSPHORIBOSYLTRANSFERASE"/>
    <property type="match status" value="1"/>
</dbReference>
<dbReference type="PANTHER" id="PTHR43285:SF2">
    <property type="entry name" value="ANTHRANILATE PHOSPHORIBOSYLTRANSFERASE"/>
    <property type="match status" value="1"/>
</dbReference>
<dbReference type="Pfam" id="PF02885">
    <property type="entry name" value="Glycos_trans_3N"/>
    <property type="match status" value="1"/>
</dbReference>
<dbReference type="Pfam" id="PF00591">
    <property type="entry name" value="Glycos_transf_3"/>
    <property type="match status" value="1"/>
</dbReference>
<dbReference type="SUPFAM" id="SSF52418">
    <property type="entry name" value="Nucleoside phosphorylase/phosphoribosyltransferase catalytic domain"/>
    <property type="match status" value="1"/>
</dbReference>
<dbReference type="SUPFAM" id="SSF47648">
    <property type="entry name" value="Nucleoside phosphorylase/phosphoribosyltransferase N-terminal domain"/>
    <property type="match status" value="1"/>
</dbReference>
<organism>
    <name type="scientific">Methanothermobacter marburgensis (strain ATCC BAA-927 / DSM 2133 / JCM 14651 / NBRC 100331 / OCM 82 / Marburg)</name>
    <name type="common">Methanobacterium thermoautotrophicum</name>
    <dbReference type="NCBI Taxonomy" id="79929"/>
    <lineage>
        <taxon>Archaea</taxon>
        <taxon>Methanobacteriati</taxon>
        <taxon>Methanobacteriota</taxon>
        <taxon>Methanomada group</taxon>
        <taxon>Methanobacteria</taxon>
        <taxon>Methanobacteriales</taxon>
        <taxon>Methanobacteriaceae</taxon>
        <taxon>Methanothermobacter</taxon>
    </lineage>
</organism>
<evidence type="ECO:0000255" key="1">
    <source>
        <dbReference type="HAMAP-Rule" id="MF_00211"/>
    </source>
</evidence>
<evidence type="ECO:0000305" key="2"/>
<gene>
    <name evidence="1" type="primary">trpD</name>
    <name type="ordered locus">MTBMA_c02400</name>
</gene>
<reference key="1">
    <citation type="journal article" date="1991" name="J. Bacteriol.">
        <title>Tryptophan gene cluster of Methanobacterium thermoautotrophicum Marburg: molecular cloning and nucleotide sequence of a putative trpEGCFBAD operon.</title>
        <authorList>
            <person name="Meile L."/>
            <person name="Stettler R."/>
            <person name="Banholzer R."/>
            <person name="Kotik M."/>
            <person name="Leisinger T."/>
        </authorList>
    </citation>
    <scope>NUCLEOTIDE SEQUENCE [GENOMIC DNA]</scope>
    <source>
        <strain>ATCC BAA-927 / DSM 2133 / JCM 14651 / NBRC 100331 / OCM 82 / Marburg</strain>
    </source>
</reference>
<reference key="2">
    <citation type="journal article" date="2010" name="J. Bacteriol.">
        <title>Complete genome sequence of Methanothermobacter marburgensis, a methanoarchaeon model organism.</title>
        <authorList>
            <person name="Liesegang H."/>
            <person name="Kaster A.K."/>
            <person name="Wiezer A."/>
            <person name="Goenrich M."/>
            <person name="Wollherr A."/>
            <person name="Seedorf H."/>
            <person name="Gottschalk G."/>
            <person name="Thauer R.K."/>
        </authorList>
    </citation>
    <scope>NUCLEOTIDE SEQUENCE [LARGE SCALE GENOMIC DNA]</scope>
    <source>
        <strain>ATCC BAA-927 / DSM 2133 / JCM 14651 / NBRC 100331 / OCM 82 / Marburg</strain>
    </source>
</reference>
<proteinExistence type="inferred from homology"/>
<comment type="function">
    <text evidence="1">Catalyzes the transfer of the phosphoribosyl group of 5-phosphorylribose-1-pyrophosphate (PRPP) to anthranilate to yield N-(5'-phosphoribosyl)-anthranilate (PRA).</text>
</comment>
<comment type="catalytic activity">
    <reaction evidence="1">
        <text>N-(5-phospho-beta-D-ribosyl)anthranilate + diphosphate = 5-phospho-alpha-D-ribose 1-diphosphate + anthranilate</text>
        <dbReference type="Rhea" id="RHEA:11768"/>
        <dbReference type="ChEBI" id="CHEBI:16567"/>
        <dbReference type="ChEBI" id="CHEBI:18277"/>
        <dbReference type="ChEBI" id="CHEBI:33019"/>
        <dbReference type="ChEBI" id="CHEBI:58017"/>
        <dbReference type="EC" id="2.4.2.18"/>
    </reaction>
</comment>
<comment type="cofactor">
    <cofactor evidence="1">
        <name>Mg(2+)</name>
        <dbReference type="ChEBI" id="CHEBI:18420"/>
    </cofactor>
    <text evidence="1">Binds 2 magnesium ions per monomer.</text>
</comment>
<comment type="pathway">
    <text evidence="1">Amino-acid biosynthesis; L-tryptophan biosynthesis; L-tryptophan from chorismate: step 2/5.</text>
</comment>
<comment type="subunit">
    <text evidence="1">Homodimer.</text>
</comment>
<comment type="similarity">
    <text evidence="1">Belongs to the anthranilate phosphoribosyltransferase family.</text>
</comment>
<comment type="caution">
    <text evidence="2">It is uncertain whether Met-1, Met-7 or Met-11 is the initiator.</text>
</comment>
<sequence length="350" mass="37296">MRFEGIMNDIMDFRNLSEDEAHDLMEMIMDGEMGDVQIAALLTALAMKGETVDEITGFARAMRERAVKVKIPESMRVVDACGTGGDRFKSYNVSTAAAIIAAAAGVKVAKHGNRAVTGSCGGADILEAAGVNIELGPEAACRSLETLGIAFMFAPLFHRATARVAPVRRELGFKTVFNILGPLTSPASAEVQLLGVFDPYLVGPVAEVLRNLGVKRAMVVHGFDGNMNPAMDEISTVGPTLVGFLEDDEIGIKRLMPPDFGVDVGQLQHLKAASTVDGNLRMFMDVLAGLDDTPGRKSRLDIALANAGALIYLAEMEDTLEGGTEAARETVESGAALRLMEDFASFTQNL</sequence>